<sequence length="176" mass="19207">MASHVDPLVVGRVIGDVVDLFVPTTAMSVRFGTKDLTNGCEIKPSVAAAPPAVQIAGRVNELFALVMTDPDAPSPSEPTMREWLHWLVVNIPGGTDPSQGDVVVPYMGPRPPVGIHRYVMVLFQQKARVAAPPPDEDAARARFSTRAFADRHDLGLPVAALYFNAQKEPANRRRRY</sequence>
<comment type="function">
    <text evidence="1">May form complexes with phosphorylated ligands by interfering with kinases and their effectors.</text>
</comment>
<comment type="similarity">
    <text evidence="3">Belongs to the phosphatidylethanolamine-binding protein family.</text>
</comment>
<protein>
    <recommendedName>
        <fullName evidence="3">Protein MOTHER of FT and TFL1 homolog 1</fullName>
        <shortName evidence="2">OsMFT1</shortName>
    </recommendedName>
</protein>
<dbReference type="EMBL" id="AP003620">
    <property type="protein sequence ID" value="BAD45362.1"/>
    <property type="molecule type" value="Genomic_DNA"/>
</dbReference>
<dbReference type="EMBL" id="AP008212">
    <property type="protein sequence ID" value="BAF19615.1"/>
    <property type="molecule type" value="Genomic_DNA"/>
</dbReference>
<dbReference type="EMBL" id="AP014962">
    <property type="protein sequence ID" value="BAS97912.1"/>
    <property type="molecule type" value="Genomic_DNA"/>
</dbReference>
<dbReference type="RefSeq" id="XP_015641734.1">
    <property type="nucleotide sequence ID" value="XM_015786248.1"/>
</dbReference>
<dbReference type="SMR" id="Q656A5"/>
<dbReference type="FunCoup" id="Q656A5">
    <property type="interactions" value="1303"/>
</dbReference>
<dbReference type="STRING" id="39947.Q656A5"/>
<dbReference type="PaxDb" id="39947-Q656A5"/>
<dbReference type="EnsemblPlants" id="Os06t0498800-01">
    <property type="protein sequence ID" value="Os06t0498800-01"/>
    <property type="gene ID" value="Os06g0498800"/>
</dbReference>
<dbReference type="Gramene" id="Os06t0498800-01">
    <property type="protein sequence ID" value="Os06t0498800-01"/>
    <property type="gene ID" value="Os06g0498800"/>
</dbReference>
<dbReference type="KEGG" id="dosa:Os06g0498800"/>
<dbReference type="eggNOG" id="KOG3346">
    <property type="taxonomic scope" value="Eukaryota"/>
</dbReference>
<dbReference type="HOGENOM" id="CLU_043994_6_1_1"/>
<dbReference type="InParanoid" id="Q656A5"/>
<dbReference type="OMA" id="IPEVHYK"/>
<dbReference type="OrthoDB" id="2506647at2759"/>
<dbReference type="Proteomes" id="UP000000763">
    <property type="component" value="Chromosome 6"/>
</dbReference>
<dbReference type="Proteomes" id="UP000059680">
    <property type="component" value="Chromosome 6"/>
</dbReference>
<dbReference type="CDD" id="cd00866">
    <property type="entry name" value="PEBP_euk"/>
    <property type="match status" value="1"/>
</dbReference>
<dbReference type="Gene3D" id="3.90.280.10">
    <property type="entry name" value="PEBP-like"/>
    <property type="match status" value="1"/>
</dbReference>
<dbReference type="InterPro" id="IPR008914">
    <property type="entry name" value="PEBP"/>
</dbReference>
<dbReference type="InterPro" id="IPR036610">
    <property type="entry name" value="PEBP-like_sf"/>
</dbReference>
<dbReference type="InterPro" id="IPR035810">
    <property type="entry name" value="PEBP_euk"/>
</dbReference>
<dbReference type="InterPro" id="IPR001858">
    <property type="entry name" value="Phosphatidylethanolamine-bd_CS"/>
</dbReference>
<dbReference type="PANTHER" id="PTHR11362">
    <property type="entry name" value="PHOSPHATIDYLETHANOLAMINE-BINDING PROTEIN"/>
    <property type="match status" value="1"/>
</dbReference>
<dbReference type="PANTHER" id="PTHR11362:SF82">
    <property type="entry name" value="PHOSPHATIDYLETHANOLAMINE-BINDING PROTEIN 4"/>
    <property type="match status" value="1"/>
</dbReference>
<dbReference type="Pfam" id="PF01161">
    <property type="entry name" value="PBP"/>
    <property type="match status" value="1"/>
</dbReference>
<dbReference type="SUPFAM" id="SSF49777">
    <property type="entry name" value="PEBP-like"/>
    <property type="match status" value="1"/>
</dbReference>
<dbReference type="PROSITE" id="PS01220">
    <property type="entry name" value="PBP"/>
    <property type="match status" value="1"/>
</dbReference>
<evidence type="ECO:0000250" key="1">
    <source>
        <dbReference type="UniProtKB" id="P30086"/>
    </source>
</evidence>
<evidence type="ECO:0000303" key="2">
    <source>
    </source>
</evidence>
<evidence type="ECO:0000305" key="3"/>
<evidence type="ECO:0000312" key="4">
    <source>
        <dbReference type="EMBL" id="BAD45362.1"/>
    </source>
</evidence>
<evidence type="ECO:0000312" key="5">
    <source>
        <dbReference type="EMBL" id="BAF19615.1"/>
    </source>
</evidence>
<proteinExistence type="inferred from homology"/>
<reference key="1">
    <citation type="journal article" date="2005" name="Nature">
        <title>The map-based sequence of the rice genome.</title>
        <authorList>
            <consortium name="International rice genome sequencing project (IRGSP)"/>
        </authorList>
    </citation>
    <scope>NUCLEOTIDE SEQUENCE [LARGE SCALE GENOMIC DNA]</scope>
    <source>
        <strain>cv. Nipponbare</strain>
    </source>
</reference>
<reference key="2">
    <citation type="journal article" date="2008" name="Nucleic Acids Res.">
        <title>The rice annotation project database (RAP-DB): 2008 update.</title>
        <authorList>
            <consortium name="The rice annotation project (RAP)"/>
        </authorList>
    </citation>
    <scope>GENOME REANNOTATION</scope>
    <source>
        <strain>cv. Nipponbare</strain>
    </source>
</reference>
<reference key="3">
    <citation type="journal article" date="2013" name="Rice">
        <title>Improvement of the Oryza sativa Nipponbare reference genome using next generation sequence and optical map data.</title>
        <authorList>
            <person name="Kawahara Y."/>
            <person name="de la Bastide M."/>
            <person name="Hamilton J.P."/>
            <person name="Kanamori H."/>
            <person name="McCombie W.R."/>
            <person name="Ouyang S."/>
            <person name="Schwartz D.C."/>
            <person name="Tanaka T."/>
            <person name="Wu J."/>
            <person name="Zhou S."/>
            <person name="Childs K.L."/>
            <person name="Davidson R.M."/>
            <person name="Lin H."/>
            <person name="Quesada-Ocampo L."/>
            <person name="Vaillancourt B."/>
            <person name="Sakai H."/>
            <person name="Lee S.S."/>
            <person name="Kim J."/>
            <person name="Numa H."/>
            <person name="Itoh T."/>
            <person name="Buell C.R."/>
            <person name="Matsumoto T."/>
        </authorList>
    </citation>
    <scope>GENOME REANNOTATION</scope>
    <source>
        <strain>cv. Nipponbare</strain>
    </source>
</reference>
<reference key="4">
    <citation type="journal article" date="2005" name="J. Mol. Evol.">
        <title>Phylogenomic analysis of the PEBP gene family in cereals.</title>
        <authorList>
            <person name="Chardon F."/>
            <person name="Damerval C."/>
        </authorList>
    </citation>
    <scope>GENE FAMILY</scope>
    <scope>NOMENCLATURE</scope>
</reference>
<keyword id="KW-1185">Reference proteome</keyword>
<accession>Q656A5</accession>
<feature type="chain" id="PRO_0000435893" description="Protein MOTHER of FT and TFL1 homolog 1">
    <location>
        <begin position="1"/>
        <end position="176"/>
    </location>
</feature>
<gene>
    <name evidence="2" type="primary">MFT1</name>
    <name evidence="5" type="ordered locus">Os06g0498800</name>
    <name evidence="3" type="ordered locus">LOC_Os06g30370</name>
    <name evidence="4" type="ORF">P0596H06.13</name>
</gene>
<name>MFT1_ORYSJ</name>
<organism>
    <name type="scientific">Oryza sativa subsp. japonica</name>
    <name type="common">Rice</name>
    <dbReference type="NCBI Taxonomy" id="39947"/>
    <lineage>
        <taxon>Eukaryota</taxon>
        <taxon>Viridiplantae</taxon>
        <taxon>Streptophyta</taxon>
        <taxon>Embryophyta</taxon>
        <taxon>Tracheophyta</taxon>
        <taxon>Spermatophyta</taxon>
        <taxon>Magnoliopsida</taxon>
        <taxon>Liliopsida</taxon>
        <taxon>Poales</taxon>
        <taxon>Poaceae</taxon>
        <taxon>BOP clade</taxon>
        <taxon>Oryzoideae</taxon>
        <taxon>Oryzeae</taxon>
        <taxon>Oryzinae</taxon>
        <taxon>Oryza</taxon>
        <taxon>Oryza sativa</taxon>
    </lineage>
</organism>